<feature type="signal peptide" description="Tat-type signal" evidence="1">
    <location>
        <begin position="1"/>
        <end position="38"/>
    </location>
</feature>
<feature type="chain" id="PRO_0000459072" description="Nicotine dehydrogenase">
    <location>
        <begin position="39"/>
        <end position="482"/>
    </location>
</feature>
<feature type="binding site" evidence="4 5 7 9 14 15 16 17 18 19 20">
    <location>
        <position position="64"/>
    </location>
    <ligand>
        <name>FAD</name>
        <dbReference type="ChEBI" id="CHEBI:57692"/>
    </ligand>
</feature>
<feature type="binding site" evidence="4 5 7 9 14 15 16 17 18 19 20">
    <location>
        <position position="83"/>
    </location>
    <ligand>
        <name>FAD</name>
        <dbReference type="ChEBI" id="CHEBI:57692"/>
    </ligand>
</feature>
<feature type="binding site" evidence="4 9 14 15 19">
    <location>
        <position position="84"/>
    </location>
    <ligand>
        <name>FAD</name>
        <dbReference type="ChEBI" id="CHEBI:57692"/>
    </ligand>
</feature>
<feature type="binding site" evidence="4 7 14 15 17 18">
    <location>
        <position position="85"/>
    </location>
    <ligand>
        <name>FAD</name>
        <dbReference type="ChEBI" id="CHEBI:57692"/>
    </ligand>
</feature>
<feature type="binding site" evidence="4 5 7 9 14 15 16 17 18 19 20">
    <location>
        <position position="91"/>
    </location>
    <ligand>
        <name>FAD</name>
        <dbReference type="ChEBI" id="CHEBI:57692"/>
    </ligand>
</feature>
<feature type="binding site" evidence="4 5 7 9 14 15 16 18 19 20">
    <location>
        <position position="108"/>
    </location>
    <ligand>
        <name>FAD</name>
        <dbReference type="ChEBI" id="CHEBI:57692"/>
    </ligand>
</feature>
<feature type="binding site" evidence="4 5 7 9 14 15 16 17 18 19 20">
    <location>
        <position position="279"/>
    </location>
    <ligand>
        <name>FAD</name>
        <dbReference type="ChEBI" id="CHEBI:57692"/>
    </ligand>
</feature>
<feature type="binding site" evidence="5 9 16 17 19 20">
    <location>
        <position position="381"/>
    </location>
    <ligand>
        <name>(S)-nicotine</name>
        <dbReference type="ChEBI" id="CHEBI:59806"/>
    </ligand>
</feature>
<feature type="binding site" evidence="4 5 7 9 14 15 16 17 18 19 20">
    <location>
        <position position="453"/>
    </location>
    <ligand>
        <name>FAD</name>
        <dbReference type="ChEBI" id="CHEBI:57692"/>
    </ligand>
</feature>
<feature type="binding site" evidence="4 5 7 14 15 16 17">
    <location>
        <position position="462"/>
    </location>
    <ligand>
        <name>FAD</name>
        <dbReference type="ChEBI" id="CHEBI:57692"/>
    </ligand>
</feature>
<feature type="binding site" evidence="4 5 7 9 14 15 16 17 18 19 20">
    <location>
        <position position="463"/>
    </location>
    <ligand>
        <name>FAD</name>
        <dbReference type="ChEBI" id="CHEBI:57692"/>
    </ligand>
</feature>
<feature type="mutagenesis site" description="More than 10-fold increase in KM; when associated with V-381. Does not affect kcat significantly, but shows a small decrease in catalytic efficiency." evidence="5">
    <original>T</original>
    <variation>V</variation>
    <location>
        <position position="250"/>
    </location>
</feature>
<feature type="mutagenesis site" description="2-fold increase in KM. More than 10-fold increase in KM; when associated with V-250. Does not affect kcat significantly, but shows a small decrease in catalytic efficiency." evidence="5">
    <original>T</original>
    <variation>V</variation>
    <location>
        <position position="381"/>
    </location>
</feature>
<feature type="mutagenesis site" description="3.5-fold increase in activity; when associated with Y-462." evidence="9">
    <original>W</original>
    <variation>F</variation>
    <location>
        <position position="427"/>
    </location>
</feature>
<feature type="mutagenesis site" description="Loss of activity; when associated with W-462." evidence="9">
    <original>W</original>
    <variation>N</variation>
    <location>
        <position position="427"/>
    </location>
</feature>
<feature type="mutagenesis site" description="2.8-fold increase in activity. 7.5-fold increase in activity; when associated with Y-462. Unstable, loses activity; when associated with V-462." evidence="9">
    <original>W</original>
    <variation>Y</variation>
    <location>
        <position position="427"/>
    </location>
</feature>
<feature type="mutagenesis site" description="8.0-fold increase in activity." evidence="9">
    <original>N</original>
    <variation>F</variation>
    <location>
        <position position="462"/>
    </location>
</feature>
<feature type="mutagenesis site" description="12-fold increase in activity." evidence="9">
    <original>N</original>
    <variation>H</variation>
    <location>
        <position position="462"/>
    </location>
</feature>
<feature type="mutagenesis site" description="2.2-fold increase in activity." evidence="9">
    <original>N</original>
    <variation>T</variation>
    <location>
        <position position="462"/>
    </location>
</feature>
<feature type="mutagenesis site" description="7.2-fold increase in activity. Unstable, loses activity; when associated with Y-427." evidence="9">
    <original>N</original>
    <variation>V</variation>
    <location>
        <position position="462"/>
    </location>
</feature>
<feature type="mutagenesis site" description="Loss of activity; when associated with N-427." evidence="9">
    <original>N</original>
    <variation>W</variation>
    <location>
        <position position="462"/>
    </location>
</feature>
<feature type="mutagenesis site" description="6.5-fold increase in activity. 7.5-fold increase in activity; when associated with Y-427. 3.5-fold increase in activity; when associated with F-427." evidence="9">
    <original>N</original>
    <variation>Y</variation>
    <location>
        <position position="462"/>
    </location>
</feature>
<feature type="turn" evidence="21">
    <location>
        <begin position="48"/>
        <end position="50"/>
    </location>
</feature>
<feature type="strand" evidence="23">
    <location>
        <begin position="53"/>
        <end position="59"/>
    </location>
</feature>
<feature type="helix" evidence="23">
    <location>
        <begin position="63"/>
        <end position="74"/>
    </location>
</feature>
<feature type="strand" evidence="23">
    <location>
        <begin position="79"/>
        <end position="82"/>
    </location>
</feature>
<feature type="strand" evidence="23">
    <location>
        <begin position="84"/>
        <end position="88"/>
    </location>
</feature>
<feature type="strand" evidence="23">
    <location>
        <begin position="94"/>
        <end position="97"/>
    </location>
</feature>
<feature type="strand" evidence="23">
    <location>
        <begin position="100"/>
        <end position="105"/>
    </location>
</feature>
<feature type="helix" evidence="23">
    <location>
        <begin position="114"/>
        <end position="123"/>
    </location>
</feature>
<feature type="strand" evidence="23">
    <location>
        <begin position="127"/>
        <end position="129"/>
    </location>
</feature>
<feature type="strand" evidence="23">
    <location>
        <begin position="136"/>
        <end position="141"/>
    </location>
</feature>
<feature type="strand" evidence="23">
    <location>
        <begin position="147"/>
        <end position="150"/>
    </location>
</feature>
<feature type="helix" evidence="23">
    <location>
        <begin position="152"/>
        <end position="166"/>
    </location>
</feature>
<feature type="turn" evidence="23">
    <location>
        <begin position="167"/>
        <end position="169"/>
    </location>
</feature>
<feature type="helix" evidence="23">
    <location>
        <begin position="170"/>
        <end position="173"/>
    </location>
</feature>
<feature type="helix" evidence="23">
    <location>
        <begin position="184"/>
        <end position="189"/>
    </location>
</feature>
<feature type="helix" evidence="23">
    <location>
        <begin position="194"/>
        <end position="198"/>
    </location>
</feature>
<feature type="helix" evidence="23">
    <location>
        <begin position="205"/>
        <end position="219"/>
    </location>
</feature>
<feature type="helix" evidence="23">
    <location>
        <begin position="223"/>
        <end position="225"/>
    </location>
</feature>
<feature type="helix" evidence="23">
    <location>
        <begin position="228"/>
        <end position="237"/>
    </location>
</feature>
<feature type="turn" evidence="23">
    <location>
        <begin position="238"/>
        <end position="240"/>
    </location>
</feature>
<feature type="helix" evidence="23">
    <location>
        <begin position="242"/>
        <end position="250"/>
    </location>
</feature>
<feature type="strand" evidence="23">
    <location>
        <begin position="251"/>
        <end position="254"/>
    </location>
</feature>
<feature type="helix" evidence="23">
    <location>
        <begin position="257"/>
        <end position="269"/>
    </location>
</feature>
<feature type="strand" evidence="23">
    <location>
        <begin position="272"/>
        <end position="274"/>
    </location>
</feature>
<feature type="strand" evidence="23">
    <location>
        <begin position="279"/>
        <end position="285"/>
    </location>
</feature>
<feature type="strand" evidence="23">
    <location>
        <begin position="288"/>
        <end position="293"/>
    </location>
</feature>
<feature type="strand" evidence="21">
    <location>
        <begin position="294"/>
        <end position="296"/>
    </location>
</feature>
<feature type="strand" evidence="23">
    <location>
        <begin position="298"/>
        <end position="306"/>
    </location>
</feature>
<feature type="helix" evidence="23">
    <location>
        <begin position="310"/>
        <end position="315"/>
    </location>
</feature>
<feature type="strand" evidence="23">
    <location>
        <begin position="317"/>
        <end position="320"/>
    </location>
</feature>
<feature type="helix" evidence="23">
    <location>
        <begin position="324"/>
        <end position="332"/>
    </location>
</feature>
<feature type="strand" evidence="23">
    <location>
        <begin position="339"/>
        <end position="347"/>
    </location>
</feature>
<feature type="strand" evidence="23">
    <location>
        <begin position="351"/>
        <end position="356"/>
    </location>
</feature>
<feature type="strand" evidence="23">
    <location>
        <begin position="364"/>
        <end position="371"/>
    </location>
</feature>
<feature type="turn" evidence="23">
    <location>
        <begin position="372"/>
        <end position="374"/>
    </location>
</feature>
<feature type="strand" evidence="23">
    <location>
        <begin position="375"/>
        <end position="384"/>
    </location>
</feature>
<feature type="helix" evidence="23">
    <location>
        <begin position="385"/>
        <end position="387"/>
    </location>
</feature>
<feature type="helix" evidence="23">
    <location>
        <begin position="393"/>
        <end position="403"/>
    </location>
</feature>
<feature type="strand" evidence="22">
    <location>
        <begin position="404"/>
        <end position="406"/>
    </location>
</feature>
<feature type="strand" evidence="23">
    <location>
        <begin position="409"/>
        <end position="415"/>
    </location>
</feature>
<feature type="turn" evidence="23">
    <location>
        <begin position="417"/>
        <end position="419"/>
    </location>
</feature>
<feature type="turn" evidence="23">
    <location>
        <begin position="421"/>
        <end position="423"/>
    </location>
</feature>
<feature type="strand" evidence="23">
    <location>
        <begin position="424"/>
        <end position="427"/>
    </location>
</feature>
<feature type="turn" evidence="23">
    <location>
        <begin position="432"/>
        <end position="434"/>
    </location>
</feature>
<feature type="helix" evidence="23">
    <location>
        <begin position="435"/>
        <end position="437"/>
    </location>
</feature>
<feature type="helix" evidence="23">
    <location>
        <begin position="438"/>
        <end position="442"/>
    </location>
</feature>
<feature type="strand" evidence="23">
    <location>
        <begin position="448"/>
        <end position="450"/>
    </location>
</feature>
<feature type="helix" evidence="23">
    <location>
        <begin position="453"/>
        <end position="455"/>
    </location>
</feature>
<feature type="strand" evidence="21">
    <location>
        <begin position="457"/>
        <end position="459"/>
    </location>
</feature>
<feature type="helix" evidence="23">
    <location>
        <begin position="463"/>
        <end position="481"/>
    </location>
</feature>
<reference key="1">
    <citation type="journal article" date="2011" name="J. Bacteriol.">
        <title>Complete genome sequence of the nicotine-degrading Pseudomonas putida strain S16.</title>
        <authorList>
            <person name="Yu H."/>
            <person name="Tang H."/>
            <person name="Wang L."/>
            <person name="Yao Y."/>
            <person name="Wu G."/>
            <person name="Xu P."/>
        </authorList>
    </citation>
    <scope>NUCLEOTIDE SEQUENCE [LARGE SCALE GENOMIC DNA]</scope>
    <source>
        <strain>DSM 28022 / S16</strain>
    </source>
</reference>
<reference key="2">
    <citation type="journal article" date="2013" name="PLoS Genet.">
        <title>Systematic unraveling of the unsolved pathway of nicotine degradation in Pseudomonas.</title>
        <authorList>
            <person name="Tang H."/>
            <person name="Wang L."/>
            <person name="Wang W."/>
            <person name="Yu H."/>
            <person name="Zhang K."/>
            <person name="Yao Y."/>
            <person name="Xu P."/>
        </authorList>
    </citation>
    <scope>FUNCTION</scope>
    <scope>COFACTOR</scope>
    <scope>PATHWAY</scope>
    <scope>INDUCTION</scope>
    <scope>DISRUPTION PHENOTYPE</scope>
    <source>
        <strain>DSM 28022 / S16</strain>
    </source>
</reference>
<reference key="3">
    <citation type="journal article" date="2015" name="J. Am. Chem. Soc.">
        <title>A new strategy for smoking cessation: characterization of a bacterial enzyme for the degradation of nicotine.</title>
        <authorList>
            <person name="Xue S."/>
            <person name="Schlosburg J.E."/>
            <person name="Janda K.D."/>
        </authorList>
    </citation>
    <scope>FUNCTION</scope>
    <scope>BIOPHYSICOCHEMICAL PROPERTIES</scope>
    <scope>BIOTECHNOLOGY</scope>
    <source>
        <strain>DSM 28022 / S16</strain>
    </source>
</reference>
<reference key="4">
    <citation type="journal article" date="2018" name="BMC Biotechnol.">
        <title>The nicotine-degrading enzyme NicA2 reduces nicotine levels in blood, nicotine distribution to brain, and nicotine discrimination and reinforcement in rats.</title>
        <authorList>
            <person name="Pentel P.R."/>
            <person name="Raleigh M.D."/>
            <person name="LeSage M.G."/>
            <person name="Thisted T."/>
            <person name="Horrigan S."/>
            <person name="Biesova Z."/>
            <person name="Kalnik M.W."/>
        </authorList>
    </citation>
    <scope>BIOTECHNOLOGY</scope>
    <source>
        <strain>DSM 28022 / S16</strain>
    </source>
</reference>
<reference key="5">
    <citation type="journal article" date="2021" name="Nat. Chem. Biol.">
        <title>A cytochrome c is the natural electron acceptor for nicotine oxidoreductase.</title>
        <authorList>
            <person name="Dulchavsky M."/>
            <person name="Clark C.T."/>
            <person name="Bardwell J.C.A."/>
            <person name="Stull F."/>
        </authorList>
    </citation>
    <scope>FUNCTION AS A DEHYDROGENASE</scope>
    <scope>CATALYTIC ACTIVITY</scope>
    <scope>REACTION MECHANISM</scope>
    <scope>COFACTOR</scope>
    <scope>SUBUNIT</scope>
    <source>
        <strain>DSM 28022 / S16</strain>
    </source>
</reference>
<reference evidence="14 15" key="6">
    <citation type="journal article" date="2016" name="Biochemistry">
        <title>Structural analysis provides mechanistic insight into nicotine oxidoreductase from Pseudomonas putida.</title>
        <authorList>
            <person name="Tararina M.A."/>
            <person name="Janda K.D."/>
            <person name="Allen K.N."/>
        </authorList>
    </citation>
    <scope>X-RAY CRYSTALLOGRAPHY (2.20 ANGSTROMS) IN COMPLEX WITH FAD</scope>
    <scope>COFACTOR</scope>
    <scope>SUBUNIT</scope>
    <source>
        <strain>DSM 28022 / S16</strain>
    </source>
</reference>
<reference evidence="16" key="7">
    <citation type="journal article" date="2018" name="Biochemistry">
        <title>Crystallography coupled with kinetic analysis provides mechanistic underpinnings of a nicotine-degrading enzyme.</title>
        <authorList>
            <person name="Tararina M.A."/>
            <person name="Xue S."/>
            <person name="Smith L.C."/>
            <person name="Muellers S.N."/>
            <person name="Miranda P.O."/>
            <person name="Janda K.D."/>
            <person name="Allen K.N."/>
        </authorList>
    </citation>
    <scope>X-RAY CRYSTALLOGRAPHY (2.65 ANGSTROMS) IN COMPLEX WITH NICOTINE AND FAD</scope>
    <scope>FUNCTION</scope>
    <scope>COFACTOR</scope>
    <scope>ACTIVITY REGULATION</scope>
    <scope>BIOPHYSICOCHEMICAL PROPERTIES</scope>
    <scope>DOMAIN</scope>
    <scope>MUTAGENESIS OF THR-250 AND THR-381</scope>
    <source>
        <strain>DSM 28022 / S16</strain>
    </source>
</reference>
<reference evidence="17 18" key="8">
    <citation type="journal article" date="2020" name="MBio">
        <title>Molecular deceleration regulates toxicant release to prevent cell damage in Pseudomonas putida S16 (DSM 28022).</title>
        <authorList>
            <person name="Tang H."/>
            <person name="Zhang K."/>
            <person name="Hu H."/>
            <person name="Wu G."/>
            <person name="Wang W."/>
            <person name="Zhu X."/>
            <person name="Liu G."/>
            <person name="Xu P."/>
        </authorList>
    </citation>
    <scope>X-RAY CRYSTALLOGRAPHY (2.05 ANGSTROMS) OF 50-482 IN COMPLEX WITH FAD AND 6-HYDROXY-L-NICOTINE</scope>
    <scope>COFACTOR</scope>
    <scope>SUBUNIT</scope>
    <scope>DOMAIN</scope>
    <scope>OVEREXPRESSION</scope>
    <source>
        <strain>DSM 28022 / S16</strain>
    </source>
</reference>
<reference evidence="19 20" key="9">
    <citation type="journal article" date="2021" name="Biochemistry">
        <title>Fast kinetics reveals rate-limiting oxidation and the role of the aromatic cage in the mechanism of the nicotine-degrading enzyme NicA2.</title>
        <authorList>
            <person name="Tararina M.A."/>
            <person name="Dam K.K."/>
            <person name="Dhingra M."/>
            <person name="Janda K.D."/>
            <person name="Palfey B.A."/>
            <person name="Allen K.N."/>
        </authorList>
    </citation>
    <scope>X-RAY CRYSTALLOGRAPHY (2.31 ANGSTROMS) OF MUTANTS VAL-462 AND TYR-427/TYR-462 IN COMPLEXES WITH FAD AND NICOTINE</scope>
    <scope>FUNCTION</scope>
    <scope>COFACTOR</scope>
    <scope>SUBUNIT</scope>
    <scope>MUTAGENESIS OF TRP-427 AND ASN-462</scope>
    <source>
        <strain>DSM 28022 / S16</strain>
    </source>
</reference>
<evidence type="ECO:0000255" key="1">
    <source>
        <dbReference type="PROSITE-ProRule" id="PRU00648"/>
    </source>
</evidence>
<evidence type="ECO:0000269" key="2">
    <source>
    </source>
</evidence>
<evidence type="ECO:0000269" key="3">
    <source>
    </source>
</evidence>
<evidence type="ECO:0000269" key="4">
    <source>
    </source>
</evidence>
<evidence type="ECO:0000269" key="5">
    <source>
    </source>
</evidence>
<evidence type="ECO:0000269" key="6">
    <source>
    </source>
</evidence>
<evidence type="ECO:0000269" key="7">
    <source>
    </source>
</evidence>
<evidence type="ECO:0000269" key="8">
    <source>
    </source>
</evidence>
<evidence type="ECO:0000269" key="9">
    <source>
    </source>
</evidence>
<evidence type="ECO:0000303" key="10">
    <source>
    </source>
</evidence>
<evidence type="ECO:0000303" key="11">
    <source>
    </source>
</evidence>
<evidence type="ECO:0000305" key="12"/>
<evidence type="ECO:0000312" key="13">
    <source>
        <dbReference type="EMBL" id="AEJ14620.1"/>
    </source>
</evidence>
<evidence type="ECO:0007744" key="14">
    <source>
        <dbReference type="PDB" id="5TTJ"/>
    </source>
</evidence>
<evidence type="ECO:0007744" key="15">
    <source>
        <dbReference type="PDB" id="5TTK"/>
    </source>
</evidence>
<evidence type="ECO:0007744" key="16">
    <source>
        <dbReference type="PDB" id="6C71"/>
    </source>
</evidence>
<evidence type="ECO:0007744" key="17">
    <source>
        <dbReference type="PDB" id="7C49"/>
    </source>
</evidence>
<evidence type="ECO:0007744" key="18">
    <source>
        <dbReference type="PDB" id="7C4A"/>
    </source>
</evidence>
<evidence type="ECO:0007744" key="19">
    <source>
        <dbReference type="PDB" id="7KHN"/>
    </source>
</evidence>
<evidence type="ECO:0007744" key="20">
    <source>
        <dbReference type="PDB" id="7KHO"/>
    </source>
</evidence>
<evidence type="ECO:0007829" key="21">
    <source>
        <dbReference type="PDB" id="5TTJ"/>
    </source>
</evidence>
<evidence type="ECO:0007829" key="22">
    <source>
        <dbReference type="PDB" id="7KHO"/>
    </source>
</evidence>
<evidence type="ECO:0007829" key="23">
    <source>
        <dbReference type="PDB" id="8DQ8"/>
    </source>
</evidence>
<dbReference type="EC" id="1.4.2.2" evidence="8"/>
<dbReference type="EMBL" id="CP002870">
    <property type="protein sequence ID" value="AEJ14620.1"/>
    <property type="molecule type" value="Genomic_DNA"/>
</dbReference>
<dbReference type="PDB" id="5TTJ">
    <property type="method" value="X-ray"/>
    <property type="resolution" value="2.20 A"/>
    <property type="chains" value="A/B=1-482"/>
</dbReference>
<dbReference type="PDB" id="5TTK">
    <property type="method" value="X-ray"/>
    <property type="resolution" value="2.51 A"/>
    <property type="chains" value="A/B/C/D=1-482"/>
</dbReference>
<dbReference type="PDB" id="6C71">
    <property type="method" value="X-ray"/>
    <property type="resolution" value="2.65 A"/>
    <property type="chains" value="A/B/C/D=1-482"/>
</dbReference>
<dbReference type="PDB" id="7C49">
    <property type="method" value="X-ray"/>
    <property type="resolution" value="2.25 A"/>
    <property type="chains" value="A/B=21-482"/>
</dbReference>
<dbReference type="PDB" id="7C4A">
    <property type="method" value="X-ray"/>
    <property type="resolution" value="2.05 A"/>
    <property type="chains" value="A/B=50-482"/>
</dbReference>
<dbReference type="PDB" id="7KHN">
    <property type="method" value="X-ray"/>
    <property type="resolution" value="2.31 A"/>
    <property type="chains" value="A=1-482"/>
</dbReference>
<dbReference type="PDB" id="7KHO">
    <property type="method" value="X-ray"/>
    <property type="resolution" value="2.69 A"/>
    <property type="chains" value="A/B/C/D=1-482"/>
</dbReference>
<dbReference type="PDB" id="8DQ7">
    <property type="method" value="X-ray"/>
    <property type="resolution" value="2.10 A"/>
    <property type="chains" value="A/B=51-482"/>
</dbReference>
<dbReference type="PDB" id="8DQ8">
    <property type="method" value="X-ray"/>
    <property type="resolution" value="1.90 A"/>
    <property type="chains" value="A/B=51-482"/>
</dbReference>
<dbReference type="PDB" id="8DSV">
    <property type="method" value="X-ray"/>
    <property type="resolution" value="2.50 A"/>
    <property type="chains" value="A/B=51-482"/>
</dbReference>
<dbReference type="PDBsum" id="5TTJ"/>
<dbReference type="PDBsum" id="5TTK"/>
<dbReference type="PDBsum" id="6C71"/>
<dbReference type="PDBsum" id="7C49"/>
<dbReference type="PDBsum" id="7C4A"/>
<dbReference type="PDBsum" id="7KHN"/>
<dbReference type="PDBsum" id="7KHO"/>
<dbReference type="PDBsum" id="8DQ7"/>
<dbReference type="PDBsum" id="8DQ8"/>
<dbReference type="PDBsum" id="8DSV"/>
<dbReference type="SMR" id="F8G0P2"/>
<dbReference type="KEGG" id="ppt:PPS_4081"/>
<dbReference type="eggNOG" id="COG1231">
    <property type="taxonomic scope" value="Bacteria"/>
</dbReference>
<dbReference type="HOGENOM" id="CLU_004498_9_1_6"/>
<dbReference type="BioCyc" id="MetaCyc:MONOMER-19250"/>
<dbReference type="UniPathway" id="UPA00106"/>
<dbReference type="GO" id="GO:0042597">
    <property type="term" value="C:periplasmic space"/>
    <property type="evidence" value="ECO:0007669"/>
    <property type="project" value="UniProtKB-SubCell"/>
</dbReference>
<dbReference type="GO" id="GO:0000166">
    <property type="term" value="F:nucleotide binding"/>
    <property type="evidence" value="ECO:0007669"/>
    <property type="project" value="UniProtKB-KW"/>
</dbReference>
<dbReference type="GO" id="GO:0016491">
    <property type="term" value="F:oxidoreductase activity"/>
    <property type="evidence" value="ECO:0007669"/>
    <property type="project" value="UniProtKB-KW"/>
</dbReference>
<dbReference type="GO" id="GO:0009820">
    <property type="term" value="P:alkaloid metabolic process"/>
    <property type="evidence" value="ECO:0007669"/>
    <property type="project" value="UniProtKB-KW"/>
</dbReference>
<dbReference type="GO" id="GO:0019608">
    <property type="term" value="P:nicotine catabolic process"/>
    <property type="evidence" value="ECO:0007669"/>
    <property type="project" value="UniProtKB-UniPathway"/>
</dbReference>
<dbReference type="Gene3D" id="3.90.660.10">
    <property type="match status" value="1"/>
</dbReference>
<dbReference type="Gene3D" id="3.50.50.60">
    <property type="entry name" value="FAD/NAD(P)-binding domain"/>
    <property type="match status" value="1"/>
</dbReference>
<dbReference type="Gene3D" id="1.10.405.10">
    <property type="entry name" value="Guanine Nucleotide Dissociation Inhibitor, domain 1"/>
    <property type="match status" value="1"/>
</dbReference>
<dbReference type="InterPro" id="IPR002937">
    <property type="entry name" value="Amino_oxidase"/>
</dbReference>
<dbReference type="InterPro" id="IPR036188">
    <property type="entry name" value="FAD/NAD-bd_sf"/>
</dbReference>
<dbReference type="InterPro" id="IPR001613">
    <property type="entry name" value="Flavin_amine_oxidase"/>
</dbReference>
<dbReference type="InterPro" id="IPR050703">
    <property type="entry name" value="Flavin_MAO"/>
</dbReference>
<dbReference type="InterPro" id="IPR006311">
    <property type="entry name" value="TAT_signal"/>
</dbReference>
<dbReference type="PANTHER" id="PTHR43563">
    <property type="entry name" value="AMINE OXIDASE"/>
    <property type="match status" value="1"/>
</dbReference>
<dbReference type="PANTHER" id="PTHR43563:SF1">
    <property type="entry name" value="AMINE OXIDASE [FLAVIN-CONTAINING] B"/>
    <property type="match status" value="1"/>
</dbReference>
<dbReference type="Pfam" id="PF01593">
    <property type="entry name" value="Amino_oxidase"/>
    <property type="match status" value="1"/>
</dbReference>
<dbReference type="PRINTS" id="PR00757">
    <property type="entry name" value="AMINEOXDASEF"/>
</dbReference>
<dbReference type="SUPFAM" id="SSF51905">
    <property type="entry name" value="FAD/NAD(P)-binding domain"/>
    <property type="match status" value="1"/>
</dbReference>
<dbReference type="PROSITE" id="PS51318">
    <property type="entry name" value="TAT"/>
    <property type="match status" value="1"/>
</dbReference>
<name>NICA2_PSEP6</name>
<protein>
    <recommendedName>
        <fullName evidence="12">Nicotine dehydrogenase</fullName>
        <ecNumber evidence="8">1.4.2.2</ecNumber>
    </recommendedName>
    <alternativeName>
        <fullName evidence="10">Nicotine oxidoreductase</fullName>
    </alternativeName>
    <alternativeName>
        <fullName evidence="11">Nicotine-degrading enzyme NicA2</fullName>
    </alternativeName>
</protein>
<gene>
    <name evidence="10" type="primary">nicA2</name>
    <name evidence="13" type="ORF">PPS_4081</name>
</gene>
<accession>F8G0P2</accession>
<sequence length="482" mass="52534">MSDKTKTNEGFSRRSFIGSAAVVTAGVAGLGAIDAASATQKTNRASTVKGGFDYDVVVVGGGFAGATAARECGLQGYRTLLLEARSRLGGRTFTSRFAGQEIEFGGAWVHWLQPHVWAEMQRYGLGVVEDPLTNLDKTLIMYNDGSVESISPDEFGKNIRIAFEKLCHDAWEVFPRPHEPMFTERARELDKSSVLDRIKTLGLSRLQQAQINSYMALYAGETTDKFGLPGVLKLFACGGWNYDAFMDTETHYRIQGGTIGLINAMLTDSGAEVRMSVPVTAVEQVNGGVKIKTDDDEIITAGVVVMTVPLNTYKHIGFTPALSKGKQRFIKEGQLSKGAKLYVHVKQNLGRVFAFADEQQPLNWVQTHDYSDELGTILSITIARKETIDVNDRDAVTREVQKMFPGVEVLGTAAYDWTADPFSLGAWAAYGVGQLSRLKDLQAAEGRILFAGAETSNGWHANIDGAVESGLRAGREVKQLLS</sequence>
<comment type="function">
    <text evidence="2 3 5 8 9">Involved in nicotine degradation (PubMed:24204321, PubMed:26237398, PubMed:29812904, PubMed:33432238). Catalyzes the conversion of nicotine to N-methylmyosmine (PubMed:24204321, PubMed:29812904, PubMed:33432238, PubMed:33464876). N-methylmyosmine undergoes spontaneous hydrolysis to form pseudooxynicotine (PN) (PubMed:24204321). S-nicotine is the optimal substrate (PubMed:29812904). Has lower activity with some nicotine analogs, but shows no activity towards neurotransmitters, including serotonin, dopamine, and norepinephrine, nicotine metabolites and common neuroactive drugs (PubMed:29812904). The enzyme is stereospecific with poor activity with (R)-nicotine as the substrate (PubMed:29812904). The c-type cytochrome protein CycN is the physiological electron acceptor (PubMed:33432238). O(2) is a poor electron acceptor (PubMed:33432238, PubMed:33464876).</text>
</comment>
<comment type="catalytic activity">
    <reaction evidence="8">
        <text>(S)-nicotine + 2 Fe(III)-[cytochrome c] = N-methylmyosmine + 2 Fe(II)-[cytochrome c] + 2 H(+)</text>
        <dbReference type="Rhea" id="RHEA:73655"/>
        <dbReference type="Rhea" id="RHEA-COMP:10350"/>
        <dbReference type="Rhea" id="RHEA-COMP:14399"/>
        <dbReference type="ChEBI" id="CHEBI:15378"/>
        <dbReference type="ChEBI" id="CHEBI:29033"/>
        <dbReference type="ChEBI" id="CHEBI:29034"/>
        <dbReference type="ChEBI" id="CHEBI:59806"/>
        <dbReference type="ChEBI" id="CHEBI:193521"/>
        <dbReference type="EC" id="1.4.2.2"/>
    </reaction>
    <physiologicalReaction direction="left-to-right" evidence="8">
        <dbReference type="Rhea" id="RHEA:73656"/>
    </physiologicalReaction>
</comment>
<comment type="cofactor">
    <cofactor evidence="2 4 5 7 8 9">
        <name>FAD</name>
        <dbReference type="ChEBI" id="CHEBI:57692"/>
    </cofactor>
    <text evidence="4 5 7 9">Binds 1 FAD per subunit.</text>
</comment>
<comment type="activity regulation">
    <text evidence="5">The catalytic rate is not significantly affected by pH.</text>
</comment>
<comment type="biophysicochemical properties">
    <kinetics>
        <KM evidence="3">43.5 nM for nicotine (at room temperature)</KM>
        <KM evidence="3">91.9 nM for nicotine (at 37 degrees Celsius)</KM>
        <KM evidence="5">114 nM for nicotine (at 22 degrees Celsius)</KM>
        <text evidence="3 5">kcat is 0.00664 sec(-1) with O(2) as electron acceptor (at room temperature) (PubMed:26237398). kcat is 0.0132 sec(-1) with O(2) as electron acceptor (at 37 degrees Celsius) (PubMed:26237398). kcat is 0.00611 sec(-1) with O(2) as electron acceptor (at 22 degrees Celsius) (PubMed:29812904).</text>
    </kinetics>
    <temperatureDependence>
        <text evidence="3">Optimum temperature is 70 degrees Celsius.</text>
    </temperatureDependence>
</comment>
<comment type="pathway">
    <text evidence="2">Alkaloid degradation; nicotine degradation.</text>
</comment>
<comment type="subunit">
    <text evidence="4 7 8 9">Monomer in solution (PubMed:27933790, PubMed:32873764). Homodimer in solution (PubMed:33432238). Forms homodimers in the crystal (PubMed:32873764, PubMed:33464876).</text>
</comment>
<comment type="subcellular location">
    <subcellularLocation>
        <location evidence="12">Periplasm</location>
    </subcellularLocation>
</comment>
<comment type="induction">
    <text evidence="2">Expression is up-regulated in the presence of nicotine.</text>
</comment>
<comment type="domain">
    <text evidence="5 7">Ligand binding is accompanied by structural changes, including puckering of the flavin isoalloxazine ring and closure of a putative substrate entrance tunnel (PubMed:29812904). The product exit passage is blocked by nine bulky amino acid residues (PubMed:32873764). NicA2 has probably evolved a restricted PN exit passage to prevent its accumulation in the cells at an undesirable rate (PubMed:32873764). Replacing the bulky residues at the product exit passage by amino acids with smaller side chains effectively increases the catalytic turnover rate (PubMed:32873764).</text>
</comment>
<comment type="PTM">
    <text evidence="1">Predicted to be exported by the Tat system. The position of the signal peptide cleavage has not been experimentally proven.</text>
</comment>
<comment type="disruption phenotype">
    <text evidence="2">Deletion of the gene prevents nicotine catabolism.</text>
</comment>
<comment type="biotechnology">
    <text evidence="3 6">Could be used as a potential therapeutic for the degradation of the critically addictive component in tobacco, nicotine (PubMed:26237398, PubMed:30041697). May decrease nicotine's circulation through its destruction so that an effective concentration is not reached or maintained in the brain (PubMed:26237398). NicA2 rapidly reduces blood and brain nicotine concentrations when administered to rats at single or multiple nicotine doses relevant to the nicotine intake of cigarette smokers (PubMed:30041697).</text>
</comment>
<comment type="miscellaneous">
    <text evidence="7">Overexpression of the gene has a modest toxic effect on cell growth, suggesting that the reaction product pseudooxynicotine (PN) is toxic for the bacteria (PubMed:32873764). Coexpression of Pnao, which converts PN to 3-succinoylsemialdehyde-pyridine (SAP), can rescue the growth of bacteria by alleviating the toxic effects of PN (PubMed:32873764).</text>
</comment>
<comment type="similarity">
    <text evidence="12">Belongs to the flavin monoamine oxidase family.</text>
</comment>
<comment type="caution">
    <text evidence="8 9">Given NicA2's homology to flavin-dependent amine oxidases, which transfer their electrons directly to O(2), it was assumed that NicA2 is a nicotine oxidase. However, catalytic turnover for NicA2 using O2 as a substrate is extremely slow compared to other enzymes in the amine oxidase family, suggesting that this enzyme is not an oxidase (PubMed:33432238, PubMed:33464876). It was shown later that NicA2 is actually a dehydrogenase, using a cytochrome c as the natural electron acceptor (PubMed:33432238).</text>
</comment>
<keyword id="KW-0002">3D-structure</keyword>
<keyword id="KW-0017">Alkaloid metabolism</keyword>
<keyword id="KW-0274">FAD</keyword>
<keyword id="KW-0285">Flavoprotein</keyword>
<keyword id="KW-0547">Nucleotide-binding</keyword>
<keyword id="KW-0560">Oxidoreductase</keyword>
<keyword id="KW-0574">Periplasm</keyword>
<keyword id="KW-0732">Signal</keyword>
<proteinExistence type="evidence at protein level"/>
<organism>
    <name type="scientific">Pseudomonas putida (strain DSM 28022 / S16)</name>
    <dbReference type="NCBI Taxonomy" id="1042876"/>
    <lineage>
        <taxon>Bacteria</taxon>
        <taxon>Pseudomonadati</taxon>
        <taxon>Pseudomonadota</taxon>
        <taxon>Gammaproteobacteria</taxon>
        <taxon>Pseudomonadales</taxon>
        <taxon>Pseudomonadaceae</taxon>
        <taxon>Pseudomonas</taxon>
    </lineage>
</organism>